<protein>
    <recommendedName>
        <fullName>Cysteine-rich venom protein pseudechetoxin-like</fullName>
        <shortName>CRVP</shortName>
    </recommendedName>
</protein>
<comment type="function">
    <text evidence="1">Blocks olfactory (CNGA2) and retinal (CNGA1) CNG channel currents. Does not affect neither depolarization- nor caffeine-induced contraction of smooth muscle (By similarity).</text>
</comment>
<comment type="subcellular location">
    <subcellularLocation>
        <location evidence="1">Secreted</location>
    </subcellularLocation>
</comment>
<comment type="tissue specificity">
    <text>Expressed by the venom gland.</text>
</comment>
<comment type="similarity">
    <text evidence="3">Belongs to the CRISP family.</text>
</comment>
<name>CRVP_OXYSC</name>
<reference key="1">
    <citation type="journal article" date="2005" name="Cell. Mol. Life Sci.">
        <title>Identification and analysis of venom gland-specific genes from the coastal taipan (Oxyuranus scutellatus) and related species.</title>
        <authorList>
            <person name="St Pierre L."/>
            <person name="Woods R."/>
            <person name="Earl S.T.H."/>
            <person name="Masci P.P."/>
            <person name="Lavin M.F."/>
        </authorList>
    </citation>
    <scope>NUCLEOTIDE SEQUENCE [MRNA]</scope>
    <source>
        <tissue>Venom gland</tissue>
    </source>
</reference>
<organism>
    <name type="scientific">Oxyuranus scutellatus scutellatus</name>
    <name type="common">Australian taipan</name>
    <name type="synonym">Coastal taipan</name>
    <dbReference type="NCBI Taxonomy" id="8667"/>
    <lineage>
        <taxon>Eukaryota</taxon>
        <taxon>Metazoa</taxon>
        <taxon>Chordata</taxon>
        <taxon>Craniata</taxon>
        <taxon>Vertebrata</taxon>
        <taxon>Euteleostomi</taxon>
        <taxon>Lepidosauria</taxon>
        <taxon>Squamata</taxon>
        <taxon>Bifurcata</taxon>
        <taxon>Unidentata</taxon>
        <taxon>Episquamata</taxon>
        <taxon>Toxicofera</taxon>
        <taxon>Serpentes</taxon>
        <taxon>Colubroidea</taxon>
        <taxon>Elapidae</taxon>
        <taxon>Hydrophiinae</taxon>
        <taxon>Oxyuranus</taxon>
    </lineage>
</organism>
<proteinExistence type="evidence at transcript level"/>
<evidence type="ECO:0000250" key="1"/>
<evidence type="ECO:0000255" key="2">
    <source>
        <dbReference type="PROSITE-ProRule" id="PRU01005"/>
    </source>
</evidence>
<evidence type="ECO:0000305" key="3"/>
<dbReference type="EMBL" id="DQ084035">
    <property type="protein sequence ID" value="AAZ38980.1"/>
    <property type="molecule type" value="mRNA"/>
</dbReference>
<dbReference type="SMR" id="Q3SB07"/>
<dbReference type="GO" id="GO:0005576">
    <property type="term" value="C:extracellular region"/>
    <property type="evidence" value="ECO:0007669"/>
    <property type="project" value="UniProtKB-SubCell"/>
</dbReference>
<dbReference type="GO" id="GO:0099106">
    <property type="term" value="F:ion channel regulator activity"/>
    <property type="evidence" value="ECO:0007669"/>
    <property type="project" value="UniProtKB-KW"/>
</dbReference>
<dbReference type="GO" id="GO:0090729">
    <property type="term" value="F:toxin activity"/>
    <property type="evidence" value="ECO:0007669"/>
    <property type="project" value="UniProtKB-KW"/>
</dbReference>
<dbReference type="CDD" id="cd05383">
    <property type="entry name" value="CAP_CRISP"/>
    <property type="match status" value="1"/>
</dbReference>
<dbReference type="FunFam" id="1.10.10.740:FF:000001">
    <property type="entry name" value="Cysteine-rich secretory protein 2"/>
    <property type="match status" value="1"/>
</dbReference>
<dbReference type="FunFam" id="3.40.33.10:FF:000005">
    <property type="entry name" value="Cysteine-rich secretory protein 2"/>
    <property type="match status" value="1"/>
</dbReference>
<dbReference type="Gene3D" id="3.40.33.10">
    <property type="entry name" value="CAP"/>
    <property type="match status" value="1"/>
</dbReference>
<dbReference type="Gene3D" id="1.10.10.740">
    <property type="entry name" value="Crisp domain"/>
    <property type="match status" value="1"/>
</dbReference>
<dbReference type="InterPro" id="IPR018244">
    <property type="entry name" value="Allrgn_V5/Tpx1_CS"/>
</dbReference>
<dbReference type="InterPro" id="IPR014044">
    <property type="entry name" value="CAP_dom"/>
</dbReference>
<dbReference type="InterPro" id="IPR035940">
    <property type="entry name" value="CAP_sf"/>
</dbReference>
<dbReference type="InterPro" id="IPR042076">
    <property type="entry name" value="Crisp-like_dom"/>
</dbReference>
<dbReference type="InterPro" id="IPR001283">
    <property type="entry name" value="CRISP-related"/>
</dbReference>
<dbReference type="InterPro" id="IPR013871">
    <property type="entry name" value="Cysteine_rich_secretory"/>
</dbReference>
<dbReference type="InterPro" id="IPR034117">
    <property type="entry name" value="SCP_CRISP"/>
</dbReference>
<dbReference type="InterPro" id="IPR003582">
    <property type="entry name" value="ShKT_dom"/>
</dbReference>
<dbReference type="PANTHER" id="PTHR10334">
    <property type="entry name" value="CYSTEINE-RICH SECRETORY PROTEIN-RELATED"/>
    <property type="match status" value="1"/>
</dbReference>
<dbReference type="Pfam" id="PF00188">
    <property type="entry name" value="CAP"/>
    <property type="match status" value="1"/>
</dbReference>
<dbReference type="Pfam" id="PF08562">
    <property type="entry name" value="Crisp"/>
    <property type="match status" value="1"/>
</dbReference>
<dbReference type="PRINTS" id="PR00837">
    <property type="entry name" value="V5TPXLIKE"/>
</dbReference>
<dbReference type="SMART" id="SM00198">
    <property type="entry name" value="SCP"/>
    <property type="match status" value="1"/>
</dbReference>
<dbReference type="SUPFAM" id="SSF57546">
    <property type="entry name" value="Crisp domain-like"/>
    <property type="match status" value="1"/>
</dbReference>
<dbReference type="SUPFAM" id="SSF55797">
    <property type="entry name" value="PR-1-like"/>
    <property type="match status" value="1"/>
</dbReference>
<dbReference type="PROSITE" id="PS01009">
    <property type="entry name" value="CRISP_1"/>
    <property type="match status" value="1"/>
</dbReference>
<dbReference type="PROSITE" id="PS01010">
    <property type="entry name" value="CRISP_2"/>
    <property type="match status" value="1"/>
</dbReference>
<dbReference type="PROSITE" id="PS51670">
    <property type="entry name" value="SHKT"/>
    <property type="match status" value="1"/>
</dbReference>
<feature type="signal peptide" evidence="1">
    <location>
        <begin position="1"/>
        <end position="19"/>
    </location>
</feature>
<feature type="propeptide" id="PRO_0000380668" evidence="1">
    <location>
        <begin position="20"/>
        <end position="28"/>
    </location>
</feature>
<feature type="chain" id="PRO_5000140332" description="Cysteine-rich venom protein pseudechetoxin-like">
    <location>
        <begin position="29"/>
        <end position="238"/>
    </location>
</feature>
<feature type="domain" description="SCP">
    <location>
        <begin position="38"/>
        <end position="164"/>
    </location>
</feature>
<feature type="domain" description="ShKT" evidence="2">
    <location>
        <begin position="200"/>
        <end position="233"/>
    </location>
</feature>
<feature type="disulfide bond" evidence="2">
    <location>
        <begin position="75"/>
        <end position="153"/>
    </location>
</feature>
<feature type="disulfide bond" evidence="2">
    <location>
        <begin position="92"/>
        <end position="165"/>
    </location>
</feature>
<feature type="disulfide bond" evidence="2">
    <location>
        <begin position="148"/>
        <end position="162"/>
    </location>
</feature>
<feature type="disulfide bond" evidence="2">
    <location>
        <begin position="184"/>
        <end position="191"/>
    </location>
</feature>
<feature type="disulfide bond" evidence="2">
    <location>
        <begin position="187"/>
        <end position="196"/>
    </location>
</feature>
<feature type="disulfide bond" evidence="2">
    <location>
        <begin position="200"/>
        <end position="233"/>
    </location>
</feature>
<feature type="disulfide bond" evidence="2">
    <location>
        <begin position="209"/>
        <end position="227"/>
    </location>
</feature>
<feature type="disulfide bond" evidence="2">
    <location>
        <begin position="218"/>
        <end position="231"/>
    </location>
</feature>
<keyword id="KW-1015">Disulfide bond</keyword>
<keyword id="KW-0872">Ion channel impairing toxin</keyword>
<keyword id="KW-0528">Neurotoxin</keyword>
<keyword id="KW-0964">Secreted</keyword>
<keyword id="KW-0732">Signal</keyword>
<keyword id="KW-0800">Toxin</keyword>
<sequence length="238" mass="26410">MIAFTVLLSLAAVLQQSSGTVDFASESSNKKDYRKEIVDKHNDLRRSVKPTARNMLQMKWNSRAAQNAKRWANRCTFAHSPPYTRTVGKLRCGENIFMSSQPFAWSGVVQAWYDEVKKFVYGIGAKPPSSVIGHYTQVVWYKSHLLGCASAKCSSTKYLYVCQYCPAGNIIGSIATPYKSGPPCGDCPSACDNGLCTNPCKHNNDFSNCKALAKKSKCQTEWIKSKCPATCFCRTEII</sequence>
<accession>Q3SB07</accession>